<reference key="1">
    <citation type="journal article" date="1995" name="Exp. Cell Res.">
        <title>Molecular nature of calicin, a major basic protein of the mammalian sperm head cytoskeleton.</title>
        <authorList>
            <person name="von Buelow M."/>
            <person name="Heid H.W."/>
            <person name="Hess H."/>
            <person name="Franke W.W."/>
        </authorList>
    </citation>
    <scope>NUCLEOTIDE SEQUENCE [MRNA]</scope>
    <scope>PROTEIN SEQUENCE OF 1-27; 44-52; 73-81; 87-104; 219-232; 239-252; 274-288; 351-356 AND 542-574</scope>
    <scope>SUBCELLULAR LOCATION</scope>
    <scope>TISSUE SPECIFICITY</scope>
    <source>
        <tissue>Sperm</tissue>
    </source>
</reference>
<reference key="2">
    <citation type="submission" date="2005-12" db="EMBL/GenBank/DDBJ databases">
        <authorList>
            <consortium name="NIH - Mammalian Gene Collection (MGC) project"/>
        </authorList>
    </citation>
    <scope>NUCLEOTIDE SEQUENCE [LARGE SCALE MRNA]</scope>
    <source>
        <strain>Crossbred X Angus</strain>
        <tissue>Liver</tissue>
    </source>
</reference>
<gene>
    <name type="primary">CCIN</name>
</gene>
<sequence length="588" mass="66890">MKLEFTEKNYNSFVLQNLNKQRKRKEYWDIALTVDHHVFFAHRNVLAAVSPLVKNLISNHDMKTTDELFITIDPNYLSPTTVDQLLDYFYSGKVVISEQNVEELLRGAQYFNTPRLRIHCNDFLIKSIRRANCLRYLFLAELFELKEVSDLAYSGIRDNFHYWASPEGCVHFMRCPPVIFGRLLRDENLHVLNEDQALNALINWVCFRKDEREKYFKKFFNYINLNAVSNKTLMYASNKLMGMENSSAHSTLIESVLVDRKQERPTSLLSYQRKGALLDSVVILGGQKAHGKFNDGVFAYIIQENLWLKLSEMPYRAAALSATSAGRYIYISGGTTEQISGLKTAWRYDMDDNSWTKLPDLPIGLVFHTMVTCGGTVYSVGGSIAPRRYVSNIYRYDERKETWCLAGKMSIPMDGTAVITRGDRNLYIVTGRCLVKGYISRVGVVDCFDTNTGEVVQCITFPIEFNHRPLLSFHQDNILCVYSHRQSVEINLQKVKANKTTTSVPLLPNNCPLDVSHAICSVGDNKVFVCGGVTTTTDVQTKDYTINPNAYLLDQKAGEWKTLAPPPEALDCPACCLAKLPCKILQRI</sequence>
<accession>Q28068</accession>
<accession>Q2T9L7</accession>
<protein>
    <recommendedName>
        <fullName>Calicin</fullName>
    </recommendedName>
</protein>
<name>CALI_BOVIN</name>
<organism>
    <name type="scientific">Bos taurus</name>
    <name type="common">Bovine</name>
    <dbReference type="NCBI Taxonomy" id="9913"/>
    <lineage>
        <taxon>Eukaryota</taxon>
        <taxon>Metazoa</taxon>
        <taxon>Chordata</taxon>
        <taxon>Craniata</taxon>
        <taxon>Vertebrata</taxon>
        <taxon>Euteleostomi</taxon>
        <taxon>Mammalia</taxon>
        <taxon>Eutheria</taxon>
        <taxon>Laurasiatheria</taxon>
        <taxon>Artiodactyla</taxon>
        <taxon>Ruminantia</taxon>
        <taxon>Pecora</taxon>
        <taxon>Bovidae</taxon>
        <taxon>Bovinae</taxon>
        <taxon>Bos</taxon>
    </lineage>
</organism>
<feature type="chain" id="PRO_0000119066" description="Calicin">
    <location>
        <begin position="1"/>
        <end position="588"/>
    </location>
</feature>
<feature type="domain" description="BTB" evidence="4">
    <location>
        <begin position="28"/>
        <end position="98"/>
    </location>
</feature>
<feature type="repeat" description="Kelch 1">
    <location>
        <begin position="280"/>
        <end position="327"/>
    </location>
</feature>
<feature type="repeat" description="Kelch 2">
    <location>
        <begin position="328"/>
        <end position="375"/>
    </location>
</feature>
<feature type="repeat" description="Kelch 3">
    <location>
        <begin position="377"/>
        <end position="423"/>
    </location>
</feature>
<feature type="repeat" description="Kelch 4">
    <location>
        <begin position="425"/>
        <end position="475"/>
    </location>
</feature>
<feature type="repeat" description="Kelch 5">
    <location>
        <begin position="476"/>
        <end position="525"/>
    </location>
</feature>
<feature type="repeat" description="Kelch 6">
    <location>
        <begin position="526"/>
        <end position="580"/>
    </location>
</feature>
<feature type="modified residue" description="Phosphoserine" evidence="2">
    <location>
        <position position="149"/>
    </location>
</feature>
<feature type="sequence conflict" description="In Ref. 2; AAI11364." evidence="6" ref="2">
    <original>F</original>
    <variation>I</variation>
    <location>
        <position position="367"/>
    </location>
</feature>
<proteinExistence type="evidence at protein level"/>
<dbReference type="EMBL" id="Z46968">
    <property type="protein sequence ID" value="CAA87089.1"/>
    <property type="molecule type" value="mRNA"/>
</dbReference>
<dbReference type="EMBL" id="BC111363">
    <property type="protein sequence ID" value="AAI11364.1"/>
    <property type="molecule type" value="mRNA"/>
</dbReference>
<dbReference type="PIR" id="I46003">
    <property type="entry name" value="I46003"/>
</dbReference>
<dbReference type="RefSeq" id="NP_776430.2">
    <property type="nucleotide sequence ID" value="NM_174005.4"/>
</dbReference>
<dbReference type="RefSeq" id="XP_010806216.1">
    <property type="nucleotide sequence ID" value="XM_010807914.2"/>
</dbReference>
<dbReference type="SMR" id="Q28068"/>
<dbReference type="FunCoup" id="Q28068">
    <property type="interactions" value="145"/>
</dbReference>
<dbReference type="STRING" id="9913.ENSBTAP00000028915"/>
<dbReference type="PaxDb" id="9913-ENSBTAP00000028915"/>
<dbReference type="Ensembl" id="ENSBTAT00000028915.7">
    <property type="protein sequence ID" value="ENSBTAP00000028915.5"/>
    <property type="gene ID" value="ENSBTAG00000021696.7"/>
</dbReference>
<dbReference type="GeneID" id="281041"/>
<dbReference type="KEGG" id="bta:281041"/>
<dbReference type="CTD" id="881"/>
<dbReference type="VEuPathDB" id="HostDB:ENSBTAG00000021696"/>
<dbReference type="VGNC" id="VGNC:26939">
    <property type="gene designation" value="CCIN"/>
</dbReference>
<dbReference type="eggNOG" id="KOG4441">
    <property type="taxonomic scope" value="Eukaryota"/>
</dbReference>
<dbReference type="GeneTree" id="ENSGT00940000162268"/>
<dbReference type="HOGENOM" id="CLU_466589_0_0_1"/>
<dbReference type="InParanoid" id="Q28068"/>
<dbReference type="OMA" id="MPYKAAA"/>
<dbReference type="OrthoDB" id="9978265at2759"/>
<dbReference type="TreeFam" id="TF331981"/>
<dbReference type="Proteomes" id="UP000009136">
    <property type="component" value="Chromosome 8"/>
</dbReference>
<dbReference type="Bgee" id="ENSBTAG00000021696">
    <property type="expression patterns" value="Expressed in spermatid and 17 other cell types or tissues"/>
</dbReference>
<dbReference type="GO" id="GO:0031463">
    <property type="term" value="C:Cul3-RING ubiquitin ligase complex"/>
    <property type="evidence" value="ECO:0000318"/>
    <property type="project" value="GO_Central"/>
</dbReference>
<dbReference type="GO" id="GO:0005737">
    <property type="term" value="C:cytoplasm"/>
    <property type="evidence" value="ECO:0000318"/>
    <property type="project" value="GO_Central"/>
</dbReference>
<dbReference type="GO" id="GO:0033150">
    <property type="term" value="C:cytoskeletal calyx"/>
    <property type="evidence" value="ECO:0000250"/>
    <property type="project" value="UniProtKB"/>
</dbReference>
<dbReference type="GO" id="GO:0005856">
    <property type="term" value="C:cytoskeleton"/>
    <property type="evidence" value="ECO:0000314"/>
    <property type="project" value="MGI"/>
</dbReference>
<dbReference type="GO" id="GO:1990756">
    <property type="term" value="F:ubiquitin-like ligase-substrate adaptor activity"/>
    <property type="evidence" value="ECO:0000318"/>
    <property type="project" value="GO_Central"/>
</dbReference>
<dbReference type="GO" id="GO:0030154">
    <property type="term" value="P:cell differentiation"/>
    <property type="evidence" value="ECO:0007669"/>
    <property type="project" value="UniProtKB-KW"/>
</dbReference>
<dbReference type="GO" id="GO:0043161">
    <property type="term" value="P:proteasome-mediated ubiquitin-dependent protein catabolic process"/>
    <property type="evidence" value="ECO:0000318"/>
    <property type="project" value="GO_Central"/>
</dbReference>
<dbReference type="GO" id="GO:0007283">
    <property type="term" value="P:spermatogenesis"/>
    <property type="evidence" value="ECO:0000250"/>
    <property type="project" value="UniProtKB"/>
</dbReference>
<dbReference type="CDD" id="cd18307">
    <property type="entry name" value="BTB_POZ_calicin"/>
    <property type="match status" value="1"/>
</dbReference>
<dbReference type="FunFam" id="1.25.40.420:FF:000022">
    <property type="entry name" value="Calicin"/>
    <property type="match status" value="1"/>
</dbReference>
<dbReference type="FunFam" id="2.120.10.80:FF:000126">
    <property type="entry name" value="Calicin"/>
    <property type="match status" value="1"/>
</dbReference>
<dbReference type="FunFam" id="2.120.10.80:FF:000138">
    <property type="entry name" value="Calicin"/>
    <property type="match status" value="1"/>
</dbReference>
<dbReference type="FunFam" id="3.30.710.10:FF:000125">
    <property type="entry name" value="Calicin"/>
    <property type="match status" value="1"/>
</dbReference>
<dbReference type="Gene3D" id="1.25.40.420">
    <property type="match status" value="1"/>
</dbReference>
<dbReference type="Gene3D" id="2.120.10.80">
    <property type="entry name" value="Kelch-type beta propeller"/>
    <property type="match status" value="2"/>
</dbReference>
<dbReference type="Gene3D" id="3.30.710.10">
    <property type="entry name" value="Potassium Channel Kv1.1, Chain A"/>
    <property type="match status" value="1"/>
</dbReference>
<dbReference type="InterPro" id="IPR011705">
    <property type="entry name" value="BACK"/>
</dbReference>
<dbReference type="InterPro" id="IPR017096">
    <property type="entry name" value="BTB-kelch_protein"/>
</dbReference>
<dbReference type="InterPro" id="IPR000210">
    <property type="entry name" value="BTB/POZ_dom"/>
</dbReference>
<dbReference type="InterPro" id="IPR048070">
    <property type="entry name" value="Calicin_BTB_POZ"/>
</dbReference>
<dbReference type="InterPro" id="IPR015915">
    <property type="entry name" value="Kelch-typ_b-propeller"/>
</dbReference>
<dbReference type="InterPro" id="IPR006652">
    <property type="entry name" value="Kelch_1"/>
</dbReference>
<dbReference type="InterPro" id="IPR011333">
    <property type="entry name" value="SKP1/BTB/POZ_sf"/>
</dbReference>
<dbReference type="PANTHER" id="PTHR45632:SF3">
    <property type="entry name" value="KELCH-LIKE PROTEIN 32"/>
    <property type="match status" value="1"/>
</dbReference>
<dbReference type="PANTHER" id="PTHR45632">
    <property type="entry name" value="LD33804P"/>
    <property type="match status" value="1"/>
</dbReference>
<dbReference type="Pfam" id="PF07707">
    <property type="entry name" value="BACK"/>
    <property type="match status" value="1"/>
</dbReference>
<dbReference type="Pfam" id="PF00651">
    <property type="entry name" value="BTB"/>
    <property type="match status" value="1"/>
</dbReference>
<dbReference type="Pfam" id="PF01344">
    <property type="entry name" value="Kelch_1"/>
    <property type="match status" value="1"/>
</dbReference>
<dbReference type="Pfam" id="PF13964">
    <property type="entry name" value="Kelch_6"/>
    <property type="match status" value="1"/>
</dbReference>
<dbReference type="PIRSF" id="PIRSF037037">
    <property type="entry name" value="Kelch-like_protein_gigaxonin"/>
    <property type="match status" value="1"/>
</dbReference>
<dbReference type="SMART" id="SM00875">
    <property type="entry name" value="BACK"/>
    <property type="match status" value="1"/>
</dbReference>
<dbReference type="SMART" id="SM00225">
    <property type="entry name" value="BTB"/>
    <property type="match status" value="1"/>
</dbReference>
<dbReference type="SMART" id="SM00612">
    <property type="entry name" value="Kelch"/>
    <property type="match status" value="3"/>
</dbReference>
<dbReference type="SUPFAM" id="SSF117281">
    <property type="entry name" value="Kelch motif"/>
    <property type="match status" value="1"/>
</dbReference>
<dbReference type="SUPFAM" id="SSF54695">
    <property type="entry name" value="POZ domain"/>
    <property type="match status" value="1"/>
</dbReference>
<dbReference type="PROSITE" id="PS50097">
    <property type="entry name" value="BTB"/>
    <property type="match status" value="1"/>
</dbReference>
<keyword id="KW-0963">Cytoplasm</keyword>
<keyword id="KW-0206">Cytoskeleton</keyword>
<keyword id="KW-0217">Developmental protein</keyword>
<keyword id="KW-0221">Differentiation</keyword>
<keyword id="KW-0903">Direct protein sequencing</keyword>
<keyword id="KW-0880">Kelch repeat</keyword>
<keyword id="KW-0597">Phosphoprotein</keyword>
<keyword id="KW-1185">Reference proteome</keyword>
<keyword id="KW-0677">Repeat</keyword>
<keyword id="KW-0744">Spermatogenesis</keyword>
<comment type="function">
    <text evidence="3">Required for both nuclear and acrosomal shaping during spermiogenesis.</text>
</comment>
<comment type="subunit">
    <text evidence="1">Interacts with CYLC1; the interaction may be relevant for proper acrosome attachment to the nuclear envelope.</text>
</comment>
<comment type="subcellular location">
    <subcellularLocation>
        <location evidence="5">Cytoplasm</location>
        <location evidence="5">Cytoskeleton</location>
        <location evidence="5">Perinuclear theca</location>
        <location evidence="5">Calyx</location>
    </subcellularLocation>
</comment>
<comment type="tissue specificity">
    <text evidence="5">Expressed in testis and in spermatozoa (at protein level).</text>
</comment>
<evidence type="ECO:0000250" key="1">
    <source>
        <dbReference type="UniProtKB" id="Q13939"/>
    </source>
</evidence>
<evidence type="ECO:0000250" key="2">
    <source>
        <dbReference type="UniProtKB" id="Q5XI58"/>
    </source>
</evidence>
<evidence type="ECO:0000250" key="3">
    <source>
        <dbReference type="UniProtKB" id="Q8CDE2"/>
    </source>
</evidence>
<evidence type="ECO:0000255" key="4">
    <source>
        <dbReference type="PROSITE-ProRule" id="PRU00037"/>
    </source>
</evidence>
<evidence type="ECO:0000269" key="5">
    <source>
    </source>
</evidence>
<evidence type="ECO:0000305" key="6"/>